<organism>
    <name type="scientific">Yersinia pestis</name>
    <dbReference type="NCBI Taxonomy" id="632"/>
    <lineage>
        <taxon>Bacteria</taxon>
        <taxon>Pseudomonadati</taxon>
        <taxon>Pseudomonadota</taxon>
        <taxon>Gammaproteobacteria</taxon>
        <taxon>Enterobacterales</taxon>
        <taxon>Yersiniaceae</taxon>
        <taxon>Yersinia</taxon>
    </lineage>
</organism>
<sequence>MKAATAVIDRHALRHNLQQIRRLAPQSRLVAVVKANAYGHGLLAAAHTLQDADCYGVARISEALMLRAGGIVKPILLLEGFFDAEDLPVLVANHIETAVHSLEQLVALEAATLSAPINVWMKLDTGMHRLGVRPDQAEAFYQRLSACRNVIQPVNIMSHFSRADEPEVAATQQQLACFDAFAAGKPGKQSIAASGGILRWPQAHRDWVRPGIVLYGVSPFDAPYGRDFGLLPAMTLKSSLIAVREHKAGESVGYGGTWVSERDTRLGVIAIGYGDGYPRSAPSGTPVWLNGREVSIVGRVSMDMISIDLGPESTDKVGDEALMWGAELPVERVAACTGISAYELITNLTSRVAMEYLGE</sequence>
<name>ALR_YERPE</name>
<protein>
    <recommendedName>
        <fullName evidence="1">Alanine racemase</fullName>
        <ecNumber evidence="1">5.1.1.1</ecNumber>
    </recommendedName>
</protein>
<reference key="1">
    <citation type="journal article" date="2001" name="Nature">
        <title>Genome sequence of Yersinia pestis, the causative agent of plague.</title>
        <authorList>
            <person name="Parkhill J."/>
            <person name="Wren B.W."/>
            <person name="Thomson N.R."/>
            <person name="Titball R.W."/>
            <person name="Holden M.T.G."/>
            <person name="Prentice M.B."/>
            <person name="Sebaihia M."/>
            <person name="James K.D."/>
            <person name="Churcher C.M."/>
            <person name="Mungall K.L."/>
            <person name="Baker S."/>
            <person name="Basham D."/>
            <person name="Bentley S.D."/>
            <person name="Brooks K."/>
            <person name="Cerdeno-Tarraga A.-M."/>
            <person name="Chillingworth T."/>
            <person name="Cronin A."/>
            <person name="Davies R.M."/>
            <person name="Davis P."/>
            <person name="Dougan G."/>
            <person name="Feltwell T."/>
            <person name="Hamlin N."/>
            <person name="Holroyd S."/>
            <person name="Jagels K."/>
            <person name="Karlyshev A.V."/>
            <person name="Leather S."/>
            <person name="Moule S."/>
            <person name="Oyston P.C.F."/>
            <person name="Quail M.A."/>
            <person name="Rutherford K.M."/>
            <person name="Simmonds M."/>
            <person name="Skelton J."/>
            <person name="Stevens K."/>
            <person name="Whitehead S."/>
            <person name="Barrell B.G."/>
        </authorList>
    </citation>
    <scope>NUCLEOTIDE SEQUENCE [LARGE SCALE GENOMIC DNA]</scope>
    <source>
        <strain>CO-92 / Biovar Orientalis</strain>
    </source>
</reference>
<reference key="2">
    <citation type="journal article" date="2002" name="J. Bacteriol.">
        <title>Genome sequence of Yersinia pestis KIM.</title>
        <authorList>
            <person name="Deng W."/>
            <person name="Burland V."/>
            <person name="Plunkett G. III"/>
            <person name="Boutin A."/>
            <person name="Mayhew G.F."/>
            <person name="Liss P."/>
            <person name="Perna N.T."/>
            <person name="Rose D.J."/>
            <person name="Mau B."/>
            <person name="Zhou S."/>
            <person name="Schwartz D.C."/>
            <person name="Fetherston J.D."/>
            <person name="Lindler L.E."/>
            <person name="Brubaker R.R."/>
            <person name="Plano G.V."/>
            <person name="Straley S.C."/>
            <person name="McDonough K.A."/>
            <person name="Nilles M.L."/>
            <person name="Matson J.S."/>
            <person name="Blattner F.R."/>
            <person name="Perry R.D."/>
        </authorList>
    </citation>
    <scope>NUCLEOTIDE SEQUENCE [LARGE SCALE GENOMIC DNA]</scope>
    <source>
        <strain>KIM10+ / Biovar Mediaevalis</strain>
    </source>
</reference>
<reference key="3">
    <citation type="journal article" date="2004" name="DNA Res.">
        <title>Complete genome sequence of Yersinia pestis strain 91001, an isolate avirulent to humans.</title>
        <authorList>
            <person name="Song Y."/>
            <person name="Tong Z."/>
            <person name="Wang J."/>
            <person name="Wang L."/>
            <person name="Guo Z."/>
            <person name="Han Y."/>
            <person name="Zhang J."/>
            <person name="Pei D."/>
            <person name="Zhou D."/>
            <person name="Qin H."/>
            <person name="Pang X."/>
            <person name="Han Y."/>
            <person name="Zhai J."/>
            <person name="Li M."/>
            <person name="Cui B."/>
            <person name="Qi Z."/>
            <person name="Jin L."/>
            <person name="Dai R."/>
            <person name="Chen F."/>
            <person name="Li S."/>
            <person name="Ye C."/>
            <person name="Du Z."/>
            <person name="Lin W."/>
            <person name="Wang J."/>
            <person name="Yu J."/>
            <person name="Yang H."/>
            <person name="Wang J."/>
            <person name="Huang P."/>
            <person name="Yang R."/>
        </authorList>
    </citation>
    <scope>NUCLEOTIDE SEQUENCE [LARGE SCALE GENOMIC DNA]</scope>
    <source>
        <strain>91001 / Biovar Mediaevalis</strain>
    </source>
</reference>
<keyword id="KW-0413">Isomerase</keyword>
<keyword id="KW-0663">Pyridoxal phosphate</keyword>
<keyword id="KW-1185">Reference proteome</keyword>
<dbReference type="EC" id="5.1.1.1" evidence="1"/>
<dbReference type="EMBL" id="AL590842">
    <property type="protein sequence ID" value="CAL19005.1"/>
    <property type="molecule type" value="Genomic_DNA"/>
</dbReference>
<dbReference type="EMBL" id="AE009952">
    <property type="protein sequence ID" value="AAM84166.1"/>
    <property type="molecule type" value="Genomic_DNA"/>
</dbReference>
<dbReference type="EMBL" id="AE017042">
    <property type="protein sequence ID" value="AAS60746.1"/>
    <property type="molecule type" value="Genomic_DNA"/>
</dbReference>
<dbReference type="PIR" id="AC0040">
    <property type="entry name" value="AC0040"/>
</dbReference>
<dbReference type="RefSeq" id="WP_002209096.1">
    <property type="nucleotide sequence ID" value="NZ_WUCM01000014.1"/>
</dbReference>
<dbReference type="RefSeq" id="YP_002345401.1">
    <property type="nucleotide sequence ID" value="NC_003143.1"/>
</dbReference>
<dbReference type="SMR" id="Q8ZJ10"/>
<dbReference type="IntAct" id="Q8ZJ10">
    <property type="interactions" value="5"/>
</dbReference>
<dbReference type="STRING" id="214092.YPO0321"/>
<dbReference type="PaxDb" id="214092-YPO0321"/>
<dbReference type="DNASU" id="1145525"/>
<dbReference type="EnsemblBacteria" id="AAS60746">
    <property type="protein sequence ID" value="AAS60746"/>
    <property type="gene ID" value="YP_0476"/>
</dbReference>
<dbReference type="GeneID" id="57974284"/>
<dbReference type="KEGG" id="ype:YPO0321"/>
<dbReference type="KEGG" id="ypk:y0578"/>
<dbReference type="KEGG" id="ypm:YP_0476"/>
<dbReference type="PATRIC" id="fig|214092.21.peg.557"/>
<dbReference type="eggNOG" id="COG0787">
    <property type="taxonomic scope" value="Bacteria"/>
</dbReference>
<dbReference type="HOGENOM" id="CLU_028393_1_0_6"/>
<dbReference type="OMA" id="WEILCGF"/>
<dbReference type="OrthoDB" id="9813814at2"/>
<dbReference type="UniPathway" id="UPA00042">
    <property type="reaction ID" value="UER00497"/>
</dbReference>
<dbReference type="Proteomes" id="UP000000815">
    <property type="component" value="Chromosome"/>
</dbReference>
<dbReference type="Proteomes" id="UP000001019">
    <property type="component" value="Chromosome"/>
</dbReference>
<dbReference type="Proteomes" id="UP000002490">
    <property type="component" value="Chromosome"/>
</dbReference>
<dbReference type="GO" id="GO:0005829">
    <property type="term" value="C:cytosol"/>
    <property type="evidence" value="ECO:0000318"/>
    <property type="project" value="GO_Central"/>
</dbReference>
<dbReference type="GO" id="GO:0008784">
    <property type="term" value="F:alanine racemase activity"/>
    <property type="evidence" value="ECO:0000318"/>
    <property type="project" value="GO_Central"/>
</dbReference>
<dbReference type="GO" id="GO:0030170">
    <property type="term" value="F:pyridoxal phosphate binding"/>
    <property type="evidence" value="ECO:0000318"/>
    <property type="project" value="GO_Central"/>
</dbReference>
<dbReference type="GO" id="GO:0030632">
    <property type="term" value="P:D-alanine biosynthetic process"/>
    <property type="evidence" value="ECO:0000318"/>
    <property type="project" value="GO_Central"/>
</dbReference>
<dbReference type="CDD" id="cd06827">
    <property type="entry name" value="PLPDE_III_AR_proteobact"/>
    <property type="match status" value="1"/>
</dbReference>
<dbReference type="FunFam" id="2.40.37.10:FF:000002">
    <property type="entry name" value="Alanine racemase"/>
    <property type="match status" value="1"/>
</dbReference>
<dbReference type="FunFam" id="3.20.20.10:FF:000002">
    <property type="entry name" value="Alanine racemase"/>
    <property type="match status" value="1"/>
</dbReference>
<dbReference type="Gene3D" id="3.20.20.10">
    <property type="entry name" value="Alanine racemase"/>
    <property type="match status" value="1"/>
</dbReference>
<dbReference type="Gene3D" id="2.40.37.10">
    <property type="entry name" value="Lyase, Ornithine Decarboxylase, Chain A, domain 1"/>
    <property type="match status" value="1"/>
</dbReference>
<dbReference type="HAMAP" id="MF_01201">
    <property type="entry name" value="Ala_racemase"/>
    <property type="match status" value="1"/>
</dbReference>
<dbReference type="InterPro" id="IPR000821">
    <property type="entry name" value="Ala_racemase"/>
</dbReference>
<dbReference type="InterPro" id="IPR009006">
    <property type="entry name" value="Ala_racemase/Decarboxylase_C"/>
</dbReference>
<dbReference type="InterPro" id="IPR011079">
    <property type="entry name" value="Ala_racemase_C"/>
</dbReference>
<dbReference type="InterPro" id="IPR001608">
    <property type="entry name" value="Ala_racemase_N"/>
</dbReference>
<dbReference type="InterPro" id="IPR020622">
    <property type="entry name" value="Ala_racemase_pyridoxalP-BS"/>
</dbReference>
<dbReference type="InterPro" id="IPR029066">
    <property type="entry name" value="PLP-binding_barrel"/>
</dbReference>
<dbReference type="NCBIfam" id="TIGR00492">
    <property type="entry name" value="alr"/>
    <property type="match status" value="1"/>
</dbReference>
<dbReference type="PANTHER" id="PTHR30511">
    <property type="entry name" value="ALANINE RACEMASE"/>
    <property type="match status" value="1"/>
</dbReference>
<dbReference type="PANTHER" id="PTHR30511:SF4">
    <property type="entry name" value="ALANINE RACEMASE, BIOSYNTHETIC"/>
    <property type="match status" value="1"/>
</dbReference>
<dbReference type="Pfam" id="PF00842">
    <property type="entry name" value="Ala_racemase_C"/>
    <property type="match status" value="1"/>
</dbReference>
<dbReference type="Pfam" id="PF01168">
    <property type="entry name" value="Ala_racemase_N"/>
    <property type="match status" value="1"/>
</dbReference>
<dbReference type="PRINTS" id="PR00992">
    <property type="entry name" value="ALARACEMASE"/>
</dbReference>
<dbReference type="SMART" id="SM01005">
    <property type="entry name" value="Ala_racemase_C"/>
    <property type="match status" value="1"/>
</dbReference>
<dbReference type="SUPFAM" id="SSF50621">
    <property type="entry name" value="Alanine racemase C-terminal domain-like"/>
    <property type="match status" value="1"/>
</dbReference>
<dbReference type="SUPFAM" id="SSF51419">
    <property type="entry name" value="PLP-binding barrel"/>
    <property type="match status" value="1"/>
</dbReference>
<dbReference type="PROSITE" id="PS00395">
    <property type="entry name" value="ALANINE_RACEMASE"/>
    <property type="match status" value="1"/>
</dbReference>
<evidence type="ECO:0000255" key="1">
    <source>
        <dbReference type="HAMAP-Rule" id="MF_01201"/>
    </source>
</evidence>
<gene>
    <name type="primary">alr</name>
    <name type="ordered locus">YPO0321</name>
    <name type="ordered locus">y0578</name>
    <name type="ordered locus">YP_0476</name>
</gene>
<proteinExistence type="inferred from homology"/>
<feature type="chain" id="PRO_0000114602" description="Alanine racemase">
    <location>
        <begin position="1"/>
        <end position="359"/>
    </location>
</feature>
<feature type="active site" description="Proton acceptor; specific for D-alanine" evidence="1">
    <location>
        <position position="34"/>
    </location>
</feature>
<feature type="active site" description="Proton acceptor; specific for L-alanine" evidence="1">
    <location>
        <position position="254"/>
    </location>
</feature>
<feature type="binding site" evidence="1">
    <location>
        <position position="129"/>
    </location>
    <ligand>
        <name>substrate</name>
    </ligand>
</feature>
<feature type="binding site" evidence="1">
    <location>
        <position position="302"/>
    </location>
    <ligand>
        <name>substrate</name>
    </ligand>
</feature>
<feature type="modified residue" description="N6-(pyridoxal phosphate)lysine" evidence="1">
    <location>
        <position position="34"/>
    </location>
</feature>
<accession>Q8ZJ10</accession>
<accession>Q0WJY7</accession>
<comment type="function">
    <text evidence="1">Catalyzes the interconversion of L-alanine and D-alanine. May also act on other amino acids.</text>
</comment>
<comment type="catalytic activity">
    <reaction evidence="1">
        <text>L-alanine = D-alanine</text>
        <dbReference type="Rhea" id="RHEA:20249"/>
        <dbReference type="ChEBI" id="CHEBI:57416"/>
        <dbReference type="ChEBI" id="CHEBI:57972"/>
        <dbReference type="EC" id="5.1.1.1"/>
    </reaction>
</comment>
<comment type="cofactor">
    <cofactor evidence="1">
        <name>pyridoxal 5'-phosphate</name>
        <dbReference type="ChEBI" id="CHEBI:597326"/>
    </cofactor>
</comment>
<comment type="pathway">
    <text evidence="1">Amino-acid biosynthesis; D-alanine biosynthesis; D-alanine from L-alanine: step 1/1.</text>
</comment>
<comment type="similarity">
    <text evidence="1">Belongs to the alanine racemase family.</text>
</comment>